<reference key="1">
    <citation type="journal article" date="2006" name="Genome Biol.">
        <title>Genomic analysis reveals that Pseudomonas aeruginosa virulence is combinatorial.</title>
        <authorList>
            <person name="Lee D.G."/>
            <person name="Urbach J.M."/>
            <person name="Wu G."/>
            <person name="Liberati N.T."/>
            <person name="Feinbaum R.L."/>
            <person name="Miyata S."/>
            <person name="Diggins L.T."/>
            <person name="He J."/>
            <person name="Saucier M."/>
            <person name="Deziel E."/>
            <person name="Friedman L."/>
            <person name="Li L."/>
            <person name="Grills G."/>
            <person name="Montgomery K."/>
            <person name="Kucherlapati R."/>
            <person name="Rahme L.G."/>
            <person name="Ausubel F.M."/>
        </authorList>
    </citation>
    <scope>NUCLEOTIDE SEQUENCE [LARGE SCALE GENOMIC DNA]</scope>
    <source>
        <strain>UCBPP-PA14</strain>
    </source>
</reference>
<accession>Q02F21</accession>
<proteinExistence type="inferred from homology"/>
<comment type="function">
    <text evidence="1">Catalyzes the phosphorylation of D-glycero-D-manno-heptose 7-phosphate at the C-1 position to selectively form D-glycero-beta-D-manno-heptose-1,7-bisphosphate.</text>
</comment>
<comment type="function">
    <text evidence="1">Catalyzes the ADP transfer from ATP to D-glycero-beta-D-manno-heptose 1-phosphate, yielding ADP-D-glycero-beta-D-manno-heptose.</text>
</comment>
<comment type="catalytic activity">
    <reaction evidence="1">
        <text>D-glycero-beta-D-manno-heptose 7-phosphate + ATP = D-glycero-beta-D-manno-heptose 1,7-bisphosphate + ADP + H(+)</text>
        <dbReference type="Rhea" id="RHEA:27473"/>
        <dbReference type="ChEBI" id="CHEBI:15378"/>
        <dbReference type="ChEBI" id="CHEBI:30616"/>
        <dbReference type="ChEBI" id="CHEBI:60204"/>
        <dbReference type="ChEBI" id="CHEBI:60208"/>
        <dbReference type="ChEBI" id="CHEBI:456216"/>
        <dbReference type="EC" id="2.7.1.167"/>
    </reaction>
</comment>
<comment type="catalytic activity">
    <reaction evidence="1">
        <text>D-glycero-beta-D-manno-heptose 1-phosphate + ATP + H(+) = ADP-D-glycero-beta-D-manno-heptose + diphosphate</text>
        <dbReference type="Rhea" id="RHEA:27465"/>
        <dbReference type="ChEBI" id="CHEBI:15378"/>
        <dbReference type="ChEBI" id="CHEBI:30616"/>
        <dbReference type="ChEBI" id="CHEBI:33019"/>
        <dbReference type="ChEBI" id="CHEBI:59967"/>
        <dbReference type="ChEBI" id="CHEBI:61593"/>
        <dbReference type="EC" id="2.7.7.70"/>
    </reaction>
</comment>
<comment type="pathway">
    <text evidence="1">Nucleotide-sugar biosynthesis; ADP-L-glycero-beta-D-manno-heptose biosynthesis; ADP-L-glycero-beta-D-manno-heptose from D-glycero-beta-D-manno-heptose 7-phosphate: step 1/4.</text>
</comment>
<comment type="pathway">
    <text evidence="1">Nucleotide-sugar biosynthesis; ADP-L-glycero-beta-D-manno-heptose biosynthesis; ADP-L-glycero-beta-D-manno-heptose from D-glycero-beta-D-manno-heptose 7-phosphate: step 3/4.</text>
</comment>
<comment type="subunit">
    <text evidence="1">Homodimer.</text>
</comment>
<comment type="similarity">
    <text evidence="1">In the N-terminal section; belongs to the carbohydrate kinase PfkB family.</text>
</comment>
<comment type="similarity">
    <text evidence="1">In the C-terminal section; belongs to the cytidylyltransferase family.</text>
</comment>
<evidence type="ECO:0000255" key="1">
    <source>
        <dbReference type="HAMAP-Rule" id="MF_01603"/>
    </source>
</evidence>
<organism>
    <name type="scientific">Pseudomonas aeruginosa (strain UCBPP-PA14)</name>
    <dbReference type="NCBI Taxonomy" id="208963"/>
    <lineage>
        <taxon>Bacteria</taxon>
        <taxon>Pseudomonadati</taxon>
        <taxon>Pseudomonadota</taxon>
        <taxon>Gammaproteobacteria</taxon>
        <taxon>Pseudomonadales</taxon>
        <taxon>Pseudomonadaceae</taxon>
        <taxon>Pseudomonas</taxon>
    </lineage>
</organism>
<name>HLDE_PSEAB</name>
<feature type="chain" id="PRO_0000291681" description="Bifunctional protein HldE">
    <location>
        <begin position="1"/>
        <end position="474"/>
    </location>
</feature>
<feature type="region of interest" description="Ribokinase">
    <location>
        <begin position="1"/>
        <end position="318"/>
    </location>
</feature>
<feature type="region of interest" description="Cytidylyltransferase">
    <location>
        <begin position="343"/>
        <end position="474"/>
    </location>
</feature>
<feature type="active site" evidence="1">
    <location>
        <position position="263"/>
    </location>
</feature>
<feature type="binding site" evidence="1">
    <location>
        <begin position="194"/>
        <end position="197"/>
    </location>
    <ligand>
        <name>ATP</name>
        <dbReference type="ChEBI" id="CHEBI:30616"/>
    </ligand>
</feature>
<dbReference type="EC" id="2.7.1.167" evidence="1"/>
<dbReference type="EC" id="2.7.7.70" evidence="1"/>
<dbReference type="EMBL" id="CP000438">
    <property type="protein sequence ID" value="ABJ14380.1"/>
    <property type="molecule type" value="Genomic_DNA"/>
</dbReference>
<dbReference type="RefSeq" id="WP_003141741.1">
    <property type="nucleotide sequence ID" value="NZ_CP034244.1"/>
</dbReference>
<dbReference type="SMR" id="Q02F21"/>
<dbReference type="KEGG" id="pau:PA14_66060"/>
<dbReference type="PseudoCAP" id="PA14_66060"/>
<dbReference type="HOGENOM" id="CLU_021150_2_1_6"/>
<dbReference type="BioCyc" id="PAER208963:G1G74-5573-MONOMER"/>
<dbReference type="UniPathway" id="UPA00356">
    <property type="reaction ID" value="UER00437"/>
</dbReference>
<dbReference type="UniPathway" id="UPA00356">
    <property type="reaction ID" value="UER00439"/>
</dbReference>
<dbReference type="Proteomes" id="UP000000653">
    <property type="component" value="Chromosome"/>
</dbReference>
<dbReference type="GO" id="GO:0005829">
    <property type="term" value="C:cytosol"/>
    <property type="evidence" value="ECO:0007669"/>
    <property type="project" value="TreeGrafter"/>
</dbReference>
<dbReference type="GO" id="GO:0005524">
    <property type="term" value="F:ATP binding"/>
    <property type="evidence" value="ECO:0007669"/>
    <property type="project" value="UniProtKB-UniRule"/>
</dbReference>
<dbReference type="GO" id="GO:0033785">
    <property type="term" value="F:heptose 7-phosphate kinase activity"/>
    <property type="evidence" value="ECO:0007669"/>
    <property type="project" value="UniProtKB-UniRule"/>
</dbReference>
<dbReference type="GO" id="GO:0033786">
    <property type="term" value="F:heptose-1-phosphate adenylyltransferase activity"/>
    <property type="evidence" value="ECO:0007669"/>
    <property type="project" value="UniProtKB-UniRule"/>
</dbReference>
<dbReference type="GO" id="GO:0016773">
    <property type="term" value="F:phosphotransferase activity, alcohol group as acceptor"/>
    <property type="evidence" value="ECO:0007669"/>
    <property type="project" value="InterPro"/>
</dbReference>
<dbReference type="GO" id="GO:0097171">
    <property type="term" value="P:ADP-L-glycero-beta-D-manno-heptose biosynthetic process"/>
    <property type="evidence" value="ECO:0007669"/>
    <property type="project" value="UniProtKB-UniPathway"/>
</dbReference>
<dbReference type="CDD" id="cd01172">
    <property type="entry name" value="RfaE_like"/>
    <property type="match status" value="1"/>
</dbReference>
<dbReference type="FunFam" id="3.40.1190.20:FF:000002">
    <property type="entry name" value="Bifunctional protein HldE"/>
    <property type="match status" value="1"/>
</dbReference>
<dbReference type="FunFam" id="3.40.50.620:FF:000028">
    <property type="entry name" value="Bifunctional protein HldE"/>
    <property type="match status" value="1"/>
</dbReference>
<dbReference type="Gene3D" id="3.40.1190.20">
    <property type="match status" value="1"/>
</dbReference>
<dbReference type="Gene3D" id="3.40.50.620">
    <property type="entry name" value="HUPs"/>
    <property type="match status" value="1"/>
</dbReference>
<dbReference type="HAMAP" id="MF_01603">
    <property type="entry name" value="HldE"/>
    <property type="match status" value="1"/>
</dbReference>
<dbReference type="InterPro" id="IPR023030">
    <property type="entry name" value="Bifunc_HldE"/>
</dbReference>
<dbReference type="InterPro" id="IPR002173">
    <property type="entry name" value="Carboh/pur_kinase_PfkB_CS"/>
</dbReference>
<dbReference type="InterPro" id="IPR004821">
    <property type="entry name" value="Cyt_trans-like"/>
</dbReference>
<dbReference type="InterPro" id="IPR011611">
    <property type="entry name" value="PfkB_dom"/>
</dbReference>
<dbReference type="InterPro" id="IPR011913">
    <property type="entry name" value="RfaE_dom_I"/>
</dbReference>
<dbReference type="InterPro" id="IPR011914">
    <property type="entry name" value="RfaE_dom_II"/>
</dbReference>
<dbReference type="InterPro" id="IPR029056">
    <property type="entry name" value="Ribokinase-like"/>
</dbReference>
<dbReference type="InterPro" id="IPR014729">
    <property type="entry name" value="Rossmann-like_a/b/a_fold"/>
</dbReference>
<dbReference type="NCBIfam" id="TIGR00125">
    <property type="entry name" value="cyt_tran_rel"/>
    <property type="match status" value="1"/>
</dbReference>
<dbReference type="NCBIfam" id="NF008454">
    <property type="entry name" value="PRK11316.1"/>
    <property type="match status" value="1"/>
</dbReference>
<dbReference type="NCBIfam" id="TIGR02198">
    <property type="entry name" value="rfaE_dom_I"/>
    <property type="match status" value="1"/>
</dbReference>
<dbReference type="NCBIfam" id="TIGR02199">
    <property type="entry name" value="rfaE_dom_II"/>
    <property type="match status" value="1"/>
</dbReference>
<dbReference type="PANTHER" id="PTHR46969">
    <property type="entry name" value="BIFUNCTIONAL PROTEIN HLDE"/>
    <property type="match status" value="1"/>
</dbReference>
<dbReference type="PANTHER" id="PTHR46969:SF1">
    <property type="entry name" value="BIFUNCTIONAL PROTEIN HLDE"/>
    <property type="match status" value="1"/>
</dbReference>
<dbReference type="Pfam" id="PF01467">
    <property type="entry name" value="CTP_transf_like"/>
    <property type="match status" value="1"/>
</dbReference>
<dbReference type="Pfam" id="PF00294">
    <property type="entry name" value="PfkB"/>
    <property type="match status" value="1"/>
</dbReference>
<dbReference type="SUPFAM" id="SSF52374">
    <property type="entry name" value="Nucleotidylyl transferase"/>
    <property type="match status" value="1"/>
</dbReference>
<dbReference type="SUPFAM" id="SSF53613">
    <property type="entry name" value="Ribokinase-like"/>
    <property type="match status" value="1"/>
</dbReference>
<dbReference type="PROSITE" id="PS00583">
    <property type="entry name" value="PFKB_KINASES_1"/>
    <property type="match status" value="1"/>
</dbReference>
<gene>
    <name evidence="1" type="primary">hldE</name>
    <name type="synonym">rfaE</name>
    <name type="ordered locus">PA14_66060</name>
</gene>
<keyword id="KW-0067">ATP-binding</keyword>
<keyword id="KW-0119">Carbohydrate metabolism</keyword>
<keyword id="KW-0418">Kinase</keyword>
<keyword id="KW-0511">Multifunctional enzyme</keyword>
<keyword id="KW-0547">Nucleotide-binding</keyword>
<keyword id="KW-0548">Nucleotidyltransferase</keyword>
<keyword id="KW-0808">Transferase</keyword>
<sequence>MKLSMPRFDQAPVLVVGDVMLDRYWHGATSRISPEAPVPVVRVEQHEDRPGGAANVALNIAALGAQALLVGVTGRDEAADSLANSLKAAGVDARFQRIDSQPTIVKLRVMSRHQQLLRVDFEEPFRTDAAALAVDVESLLAKVKVLVLSDYGKGALQNHQVLIQAARARNIPVLADPKGKDFAIYRGASLITPNLSEFETIVGRCADEAELVAKGQELMSELDLGALLVTRGEHGMTLLRHGQPALHLPARAREVFDVTGAGDTVISTLAAALAAGEELPSAVGLANLAAGIVVGKLGTAAISAPELRRAVQREQGSERGVLGLEQLLLAIEDARAHGEKIVFTNGCFDILHAGHVTYLEQARAQGDRLIVGVNDDASVTRLKGVGRPINSVDRRMAVLAGLGAVDWVVSFAEDTPERLLEQVRPDVLVKGGDYGVEQVVGAQIVKAYGGEVRVLGLVENSSTTAIVEKIRQKG</sequence>
<protein>
    <recommendedName>
        <fullName evidence="1">Bifunctional protein HldE</fullName>
    </recommendedName>
    <domain>
        <recommendedName>
            <fullName evidence="1">D-beta-D-heptose 7-phosphate kinase</fullName>
            <ecNumber evidence="1">2.7.1.167</ecNumber>
        </recommendedName>
        <alternativeName>
            <fullName evidence="1">D-beta-D-heptose 7-phosphotransferase</fullName>
        </alternativeName>
        <alternativeName>
            <fullName evidence="1">D-glycero-beta-D-manno-heptose-7-phosphate kinase</fullName>
        </alternativeName>
    </domain>
    <domain>
        <recommendedName>
            <fullName evidence="1">D-beta-D-heptose 1-phosphate adenylyltransferase</fullName>
            <ecNumber evidence="1">2.7.7.70</ecNumber>
        </recommendedName>
        <alternativeName>
            <fullName evidence="1">D-glycero-beta-D-manno-heptose 1-phosphate adenylyltransferase</fullName>
        </alternativeName>
    </domain>
</protein>